<evidence type="ECO:0000255" key="1">
    <source>
        <dbReference type="HAMAP-Rule" id="MF_00195"/>
    </source>
</evidence>
<sequence>MHKVAIVGRPNVGKSSLFNRLIGRREAVVADFPGVTRDAKEGLMLYHNHRITLIDTGGLWSGDEWEQAIREKAEWAMEGAQAVIFVLDPREGLSAADYEVADWLRRLGKPVIVTANKIDSQKHEPYLAELWGLGFGDPVAISAEHARGLDDLMDRVMKYLPEDDEDVPDIAPIRISLIGRPNVGKSSLLNAITQSDRAIVADLPGTTRDSLDVEWDYGGQRFVLVDTAGIRKKPDTAIEDFAIQRSQAAIERSDVIWLVVNATDIGDHELKLANLAYDSGKPVIVVVNKWDLVPDAELKSTEKDLNQKLHHISFAPRVYTSAINDYGIHDMLAEAMKLYEKWQSRIGTSELNRWLEVWQMKQRVPNFHGKPLRMYFMTQVETAPPTFAIFCNRADFVTRAYEGFLQNRIREDLELAGVPVRLKWKEKGPYKKGEADED</sequence>
<keyword id="KW-0342">GTP-binding</keyword>
<keyword id="KW-0547">Nucleotide-binding</keyword>
<keyword id="KW-1185">Reference proteome</keyword>
<keyword id="KW-0677">Repeat</keyword>
<keyword id="KW-0690">Ribosome biogenesis</keyword>
<comment type="function">
    <text evidence="1">GTPase that plays an essential role in the late steps of ribosome biogenesis.</text>
</comment>
<comment type="subunit">
    <text evidence="1">Associates with the 50S ribosomal subunit.</text>
</comment>
<comment type="similarity">
    <text evidence="1">Belongs to the TRAFAC class TrmE-Era-EngA-EngB-Septin-like GTPase superfamily. EngA (Der) GTPase family.</text>
</comment>
<name>DER_DEIRA</name>
<accession>Q9RS19</accession>
<reference key="1">
    <citation type="journal article" date="1999" name="Science">
        <title>Genome sequence of the radioresistant bacterium Deinococcus radiodurans R1.</title>
        <authorList>
            <person name="White O."/>
            <person name="Eisen J.A."/>
            <person name="Heidelberg J.F."/>
            <person name="Hickey E.K."/>
            <person name="Peterson J.D."/>
            <person name="Dodson R.J."/>
            <person name="Haft D.H."/>
            <person name="Gwinn M.L."/>
            <person name="Nelson W.C."/>
            <person name="Richardson D.L."/>
            <person name="Moffat K.S."/>
            <person name="Qin H."/>
            <person name="Jiang L."/>
            <person name="Pamphile W."/>
            <person name="Crosby M."/>
            <person name="Shen M."/>
            <person name="Vamathevan J.J."/>
            <person name="Lam P."/>
            <person name="McDonald L.A."/>
            <person name="Utterback T.R."/>
            <person name="Zalewski C."/>
            <person name="Makarova K.S."/>
            <person name="Aravind L."/>
            <person name="Daly M.J."/>
            <person name="Minton K.W."/>
            <person name="Fleischmann R.D."/>
            <person name="Ketchum K.A."/>
            <person name="Nelson K.E."/>
            <person name="Salzberg S.L."/>
            <person name="Smith H.O."/>
            <person name="Venter J.C."/>
            <person name="Fraser C.M."/>
        </authorList>
    </citation>
    <scope>NUCLEOTIDE SEQUENCE [LARGE SCALE GENOMIC DNA]</scope>
    <source>
        <strain>ATCC 13939 / DSM 20539 / JCM 16871 / CCUG 27074 / LMG 4051 / NBRC 15346 / NCIMB 9279 / VKM B-1422 / R1</strain>
    </source>
</reference>
<dbReference type="EMBL" id="AE000513">
    <property type="protein sequence ID" value="AAF11852.1"/>
    <property type="molecule type" value="Genomic_DNA"/>
</dbReference>
<dbReference type="PIR" id="F75290">
    <property type="entry name" value="F75290"/>
</dbReference>
<dbReference type="RefSeq" id="NP_296029.1">
    <property type="nucleotide sequence ID" value="NC_001263.1"/>
</dbReference>
<dbReference type="RefSeq" id="WP_010888936.1">
    <property type="nucleotide sequence ID" value="NC_001263.1"/>
</dbReference>
<dbReference type="SMR" id="Q9RS19"/>
<dbReference type="FunCoup" id="Q9RS19">
    <property type="interactions" value="381"/>
</dbReference>
<dbReference type="STRING" id="243230.DR_2308"/>
<dbReference type="PaxDb" id="243230-DR_2308"/>
<dbReference type="EnsemblBacteria" id="AAF11852">
    <property type="protein sequence ID" value="AAF11852"/>
    <property type="gene ID" value="DR_2308"/>
</dbReference>
<dbReference type="GeneID" id="69518560"/>
<dbReference type="KEGG" id="dra:DR_2308"/>
<dbReference type="PATRIC" id="fig|243230.17.peg.2537"/>
<dbReference type="eggNOG" id="COG1160">
    <property type="taxonomic scope" value="Bacteria"/>
</dbReference>
<dbReference type="HOGENOM" id="CLU_016077_6_2_0"/>
<dbReference type="InParanoid" id="Q9RS19"/>
<dbReference type="OrthoDB" id="9805918at2"/>
<dbReference type="BRENDA" id="3.6.5.2">
    <property type="organism ID" value="1856"/>
</dbReference>
<dbReference type="Proteomes" id="UP000002524">
    <property type="component" value="Chromosome 1"/>
</dbReference>
<dbReference type="GO" id="GO:0005525">
    <property type="term" value="F:GTP binding"/>
    <property type="evidence" value="ECO:0007669"/>
    <property type="project" value="UniProtKB-UniRule"/>
</dbReference>
<dbReference type="GO" id="GO:0043022">
    <property type="term" value="F:ribosome binding"/>
    <property type="evidence" value="ECO:0000318"/>
    <property type="project" value="GO_Central"/>
</dbReference>
<dbReference type="GO" id="GO:0042254">
    <property type="term" value="P:ribosome biogenesis"/>
    <property type="evidence" value="ECO:0007669"/>
    <property type="project" value="UniProtKB-KW"/>
</dbReference>
<dbReference type="CDD" id="cd01894">
    <property type="entry name" value="EngA1"/>
    <property type="match status" value="1"/>
</dbReference>
<dbReference type="CDD" id="cd01895">
    <property type="entry name" value="EngA2"/>
    <property type="match status" value="1"/>
</dbReference>
<dbReference type="FunFam" id="3.30.300.20:FF:000004">
    <property type="entry name" value="GTPase Der"/>
    <property type="match status" value="1"/>
</dbReference>
<dbReference type="FunFam" id="3.40.50.300:FF:000040">
    <property type="entry name" value="GTPase Der"/>
    <property type="match status" value="1"/>
</dbReference>
<dbReference type="FunFam" id="3.40.50.300:FF:000953">
    <property type="entry name" value="GTPase Der"/>
    <property type="match status" value="1"/>
</dbReference>
<dbReference type="Gene3D" id="3.30.300.20">
    <property type="match status" value="1"/>
</dbReference>
<dbReference type="Gene3D" id="3.40.50.300">
    <property type="entry name" value="P-loop containing nucleotide triphosphate hydrolases"/>
    <property type="match status" value="2"/>
</dbReference>
<dbReference type="HAMAP" id="MF_00195">
    <property type="entry name" value="GTPase_Der"/>
    <property type="match status" value="1"/>
</dbReference>
<dbReference type="InterPro" id="IPR031166">
    <property type="entry name" value="G_ENGA"/>
</dbReference>
<dbReference type="InterPro" id="IPR006073">
    <property type="entry name" value="GTP-bd"/>
</dbReference>
<dbReference type="InterPro" id="IPR016484">
    <property type="entry name" value="GTPase_Der"/>
</dbReference>
<dbReference type="InterPro" id="IPR032859">
    <property type="entry name" value="KH_dom-like"/>
</dbReference>
<dbReference type="InterPro" id="IPR015946">
    <property type="entry name" value="KH_dom-like_a/b"/>
</dbReference>
<dbReference type="InterPro" id="IPR027417">
    <property type="entry name" value="P-loop_NTPase"/>
</dbReference>
<dbReference type="InterPro" id="IPR005225">
    <property type="entry name" value="Small_GTP-bd"/>
</dbReference>
<dbReference type="NCBIfam" id="TIGR03594">
    <property type="entry name" value="GTPase_EngA"/>
    <property type="match status" value="1"/>
</dbReference>
<dbReference type="NCBIfam" id="TIGR00231">
    <property type="entry name" value="small_GTP"/>
    <property type="match status" value="2"/>
</dbReference>
<dbReference type="PANTHER" id="PTHR43834">
    <property type="entry name" value="GTPASE DER"/>
    <property type="match status" value="1"/>
</dbReference>
<dbReference type="PANTHER" id="PTHR43834:SF6">
    <property type="entry name" value="GTPASE DER"/>
    <property type="match status" value="1"/>
</dbReference>
<dbReference type="Pfam" id="PF14714">
    <property type="entry name" value="KH_dom-like"/>
    <property type="match status" value="1"/>
</dbReference>
<dbReference type="Pfam" id="PF01926">
    <property type="entry name" value="MMR_HSR1"/>
    <property type="match status" value="2"/>
</dbReference>
<dbReference type="PIRSF" id="PIRSF006485">
    <property type="entry name" value="GTP-binding_EngA"/>
    <property type="match status" value="1"/>
</dbReference>
<dbReference type="PRINTS" id="PR00326">
    <property type="entry name" value="GTP1OBG"/>
</dbReference>
<dbReference type="SUPFAM" id="SSF52540">
    <property type="entry name" value="P-loop containing nucleoside triphosphate hydrolases"/>
    <property type="match status" value="2"/>
</dbReference>
<dbReference type="PROSITE" id="PS51712">
    <property type="entry name" value="G_ENGA"/>
    <property type="match status" value="2"/>
</dbReference>
<feature type="chain" id="PRO_0000178990" description="GTPase Der">
    <location>
        <begin position="1"/>
        <end position="438"/>
    </location>
</feature>
<feature type="domain" description="EngA-type G 1">
    <location>
        <begin position="2"/>
        <end position="164"/>
    </location>
</feature>
<feature type="domain" description="EngA-type G 2">
    <location>
        <begin position="173"/>
        <end position="343"/>
    </location>
</feature>
<feature type="domain" description="KH-like" evidence="1">
    <location>
        <begin position="344"/>
        <end position="428"/>
    </location>
</feature>
<feature type="binding site" evidence="1">
    <location>
        <begin position="8"/>
        <end position="15"/>
    </location>
    <ligand>
        <name>GTP</name>
        <dbReference type="ChEBI" id="CHEBI:37565"/>
        <label>1</label>
    </ligand>
</feature>
<feature type="binding site" evidence="1">
    <location>
        <begin position="55"/>
        <end position="59"/>
    </location>
    <ligand>
        <name>GTP</name>
        <dbReference type="ChEBI" id="CHEBI:37565"/>
        <label>1</label>
    </ligand>
</feature>
<feature type="binding site" evidence="1">
    <location>
        <begin position="116"/>
        <end position="119"/>
    </location>
    <ligand>
        <name>GTP</name>
        <dbReference type="ChEBI" id="CHEBI:37565"/>
        <label>1</label>
    </ligand>
</feature>
<feature type="binding site" evidence="1">
    <location>
        <begin position="179"/>
        <end position="186"/>
    </location>
    <ligand>
        <name>GTP</name>
        <dbReference type="ChEBI" id="CHEBI:37565"/>
        <label>2</label>
    </ligand>
</feature>
<feature type="binding site" evidence="1">
    <location>
        <begin position="226"/>
        <end position="230"/>
    </location>
    <ligand>
        <name>GTP</name>
        <dbReference type="ChEBI" id="CHEBI:37565"/>
        <label>2</label>
    </ligand>
</feature>
<feature type="binding site" evidence="1">
    <location>
        <begin position="288"/>
        <end position="291"/>
    </location>
    <ligand>
        <name>GTP</name>
        <dbReference type="ChEBI" id="CHEBI:37565"/>
        <label>2</label>
    </ligand>
</feature>
<proteinExistence type="inferred from homology"/>
<organism>
    <name type="scientific">Deinococcus radiodurans (strain ATCC 13939 / DSM 20539 / JCM 16871 / CCUG 27074 / LMG 4051 / NBRC 15346 / NCIMB 9279 / VKM B-1422 / R1)</name>
    <dbReference type="NCBI Taxonomy" id="243230"/>
    <lineage>
        <taxon>Bacteria</taxon>
        <taxon>Thermotogati</taxon>
        <taxon>Deinococcota</taxon>
        <taxon>Deinococci</taxon>
        <taxon>Deinococcales</taxon>
        <taxon>Deinococcaceae</taxon>
        <taxon>Deinococcus</taxon>
    </lineage>
</organism>
<gene>
    <name evidence="1" type="primary">der</name>
    <name type="synonym">engA</name>
    <name type="ordered locus">DR_2308</name>
</gene>
<protein>
    <recommendedName>
        <fullName evidence="1">GTPase Der</fullName>
    </recommendedName>
    <alternativeName>
        <fullName evidence="1">GTP-binding protein EngA</fullName>
    </alternativeName>
</protein>